<feature type="chain" id="PRO_0000211201" description="Histone acetyltransferase GCN5">
    <location>
        <begin position="1"/>
        <end position="439"/>
    </location>
</feature>
<feature type="domain" description="N-acetyltransferase" evidence="3">
    <location>
        <begin position="100"/>
        <end position="255"/>
    </location>
</feature>
<feature type="domain" description="Bromo" evidence="2">
    <location>
        <begin position="327"/>
        <end position="431"/>
    </location>
</feature>
<feature type="region of interest" description="Disordered" evidence="4">
    <location>
        <begin position="1"/>
        <end position="59"/>
    </location>
</feature>
<feature type="compositionally biased region" description="Basic and acidic residues" evidence="4">
    <location>
        <begin position="1"/>
        <end position="28"/>
    </location>
</feature>
<feature type="compositionally biased region" description="Basic and acidic residues" evidence="4">
    <location>
        <begin position="39"/>
        <end position="59"/>
    </location>
</feature>
<feature type="active site" description="Proton donor/acceptor" evidence="1">
    <location>
        <position position="173"/>
    </location>
</feature>
<feature type="binding site" evidence="1">
    <location>
        <begin position="177"/>
        <end position="179"/>
    </location>
    <ligand>
        <name>acetyl-CoA</name>
        <dbReference type="ChEBI" id="CHEBI:57288"/>
    </ligand>
</feature>
<feature type="binding site" evidence="1">
    <location>
        <begin position="184"/>
        <end position="190"/>
    </location>
    <ligand>
        <name>acetyl-CoA</name>
        <dbReference type="ChEBI" id="CHEBI:57288"/>
    </ligand>
</feature>
<feature type="binding site" evidence="1">
    <location>
        <begin position="216"/>
        <end position="219"/>
    </location>
    <ligand>
        <name>acetyl-CoA</name>
        <dbReference type="ChEBI" id="CHEBI:57288"/>
    </ligand>
</feature>
<feature type="site" description="Important for catalytic activity">
    <location>
        <position position="173"/>
    </location>
</feature>
<feature type="sequence conflict" description="In Ref. 4; AAT93234." evidence="35" ref="4">
    <original>G</original>
    <variation>D</variation>
    <location>
        <position position="187"/>
    </location>
</feature>
<feature type="strand" evidence="43">
    <location>
        <begin position="74"/>
        <end position="79"/>
    </location>
</feature>
<feature type="strand" evidence="43">
    <location>
        <begin position="82"/>
        <end position="87"/>
    </location>
</feature>
<feature type="helix" evidence="43">
    <location>
        <begin position="90"/>
        <end position="96"/>
    </location>
</feature>
<feature type="strand" evidence="42">
    <location>
        <begin position="100"/>
        <end position="105"/>
    </location>
</feature>
<feature type="helix" evidence="42">
    <location>
        <begin position="111"/>
        <end position="127"/>
    </location>
</feature>
<feature type="strand" evidence="44">
    <location>
        <begin position="129"/>
        <end position="131"/>
    </location>
</feature>
<feature type="helix" evidence="42">
    <location>
        <begin position="133"/>
        <end position="141"/>
    </location>
</feature>
<feature type="strand" evidence="42">
    <location>
        <begin position="146"/>
        <end position="152"/>
    </location>
</feature>
<feature type="turn" evidence="42">
    <location>
        <begin position="153"/>
        <end position="155"/>
    </location>
</feature>
<feature type="strand" evidence="42">
    <location>
        <begin position="156"/>
        <end position="166"/>
    </location>
</feature>
<feature type="helix" evidence="42">
    <location>
        <begin position="167"/>
        <end position="169"/>
    </location>
</feature>
<feature type="strand" evidence="42">
    <location>
        <begin position="171"/>
        <end position="179"/>
    </location>
</feature>
<feature type="helix" evidence="42">
    <location>
        <begin position="188"/>
        <end position="203"/>
    </location>
</feature>
<feature type="strand" evidence="42">
    <location>
        <begin position="208"/>
        <end position="213"/>
    </location>
</feature>
<feature type="helix" evidence="42">
    <location>
        <begin position="215"/>
        <end position="217"/>
    </location>
</feature>
<feature type="helix" evidence="42">
    <location>
        <begin position="218"/>
        <end position="223"/>
    </location>
</feature>
<feature type="strand" evidence="42">
    <location>
        <begin position="227"/>
        <end position="229"/>
    </location>
</feature>
<feature type="helix" evidence="42">
    <location>
        <begin position="234"/>
        <end position="237"/>
    </location>
</feature>
<feature type="turn" evidence="44">
    <location>
        <begin position="238"/>
        <end position="240"/>
    </location>
</feature>
<feature type="strand" evidence="42">
    <location>
        <begin position="248"/>
        <end position="253"/>
    </location>
</feature>
<feature type="strand" evidence="44">
    <location>
        <begin position="256"/>
        <end position="258"/>
    </location>
</feature>
<feature type="helix" evidence="44">
    <location>
        <begin position="260"/>
        <end position="262"/>
    </location>
</feature>
<feature type="helix" evidence="44">
    <location>
        <begin position="263"/>
        <end position="279"/>
    </location>
</feature>
<feature type="helix" evidence="44">
    <location>
        <begin position="292"/>
        <end position="294"/>
    </location>
</feature>
<feature type="helix" evidence="44">
    <location>
        <begin position="297"/>
        <end position="299"/>
    </location>
</feature>
<feature type="strand" evidence="43">
    <location>
        <begin position="304"/>
        <end position="306"/>
    </location>
</feature>
<feature type="helix" evidence="44">
    <location>
        <begin position="310"/>
        <end position="313"/>
    </location>
</feature>
<feature type="helix" evidence="41">
    <location>
        <begin position="333"/>
        <end position="345"/>
    </location>
</feature>
<feature type="helix" evidence="41">
    <location>
        <begin position="350"/>
        <end position="352"/>
    </location>
</feature>
<feature type="turn" evidence="41">
    <location>
        <begin position="358"/>
        <end position="360"/>
    </location>
</feature>
<feature type="helix" evidence="41">
    <location>
        <begin position="364"/>
        <end position="367"/>
    </location>
</feature>
<feature type="helix" evidence="41">
    <location>
        <begin position="374"/>
        <end position="382"/>
    </location>
</feature>
<feature type="helix" evidence="41">
    <location>
        <begin position="389"/>
        <end position="406"/>
    </location>
</feature>
<feature type="helix" evidence="41">
    <location>
        <begin position="412"/>
        <end position="429"/>
    </location>
</feature>
<feature type="helix" evidence="41">
    <location>
        <begin position="432"/>
        <end position="437"/>
    </location>
</feature>
<dbReference type="EC" id="2.3.1.48" evidence="5"/>
<dbReference type="EC" id="2.3.1.-" evidence="26"/>
<dbReference type="EMBL" id="X68628">
    <property type="protein sequence ID" value="CAA48602.1"/>
    <property type="molecule type" value="Genomic_DNA"/>
</dbReference>
<dbReference type="EMBL" id="Z73037">
    <property type="protein sequence ID" value="CAA97281.1"/>
    <property type="molecule type" value="Genomic_DNA"/>
</dbReference>
<dbReference type="EMBL" id="AY693215">
    <property type="protein sequence ID" value="AAT93234.1"/>
    <property type="molecule type" value="Genomic_DNA"/>
</dbReference>
<dbReference type="EMBL" id="X99228">
    <property type="protein sequence ID" value="CAA67614.1"/>
    <property type="molecule type" value="Genomic_DNA"/>
</dbReference>
<dbReference type="EMBL" id="BK006941">
    <property type="protein sequence ID" value="DAA08343.1"/>
    <property type="molecule type" value="Genomic_DNA"/>
</dbReference>
<dbReference type="PIR" id="S28051">
    <property type="entry name" value="S28051"/>
</dbReference>
<dbReference type="RefSeq" id="NP_011768.1">
    <property type="nucleotide sequence ID" value="NM_001181381.1"/>
</dbReference>
<dbReference type="PDB" id="1E6I">
    <property type="method" value="X-ray"/>
    <property type="resolution" value="1.87 A"/>
    <property type="chains" value="A=324-439"/>
</dbReference>
<dbReference type="PDB" id="1YGH">
    <property type="method" value="X-ray"/>
    <property type="resolution" value="1.90 A"/>
    <property type="chains" value="A/B=99-262"/>
</dbReference>
<dbReference type="PDB" id="6CW2">
    <property type="method" value="X-ray"/>
    <property type="resolution" value="2.67 A"/>
    <property type="chains" value="D=67-317"/>
</dbReference>
<dbReference type="PDB" id="6CW3">
    <property type="method" value="X-ray"/>
    <property type="resolution" value="1.98 A"/>
    <property type="chains" value="F/H=67-317"/>
</dbReference>
<dbReference type="PDBsum" id="1E6I"/>
<dbReference type="PDBsum" id="1YGH"/>
<dbReference type="PDBsum" id="6CW2"/>
<dbReference type="PDBsum" id="6CW3"/>
<dbReference type="SMR" id="Q03330"/>
<dbReference type="BioGRID" id="33503">
    <property type="interactions" value="658"/>
</dbReference>
<dbReference type="ComplexPortal" id="CPX-608">
    <property type="entry name" value="ADA complex"/>
</dbReference>
<dbReference type="ComplexPortal" id="CPX-656">
    <property type="entry name" value="SAGA complex"/>
</dbReference>
<dbReference type="ComplexPortal" id="CPX-675">
    <property type="entry name" value="SLIK (SAGA-like) complex"/>
</dbReference>
<dbReference type="DIP" id="DIP-710N"/>
<dbReference type="FunCoup" id="Q03330">
    <property type="interactions" value="632"/>
</dbReference>
<dbReference type="IntAct" id="Q03330">
    <property type="interactions" value="397"/>
</dbReference>
<dbReference type="MINT" id="Q03330"/>
<dbReference type="STRING" id="4932.YGR252W"/>
<dbReference type="BindingDB" id="Q03330"/>
<dbReference type="ChEMBL" id="CHEMBL4669"/>
<dbReference type="CarbonylDB" id="Q03330"/>
<dbReference type="iPTMnet" id="Q03330"/>
<dbReference type="PaxDb" id="4932-YGR252W"/>
<dbReference type="PeptideAtlas" id="Q03330"/>
<dbReference type="ABCD" id="Q03330">
    <property type="antibodies" value="2 sequenced antibodies"/>
</dbReference>
<dbReference type="DNASU" id="853167"/>
<dbReference type="EnsemblFungi" id="YGR252W_mRNA">
    <property type="protein sequence ID" value="YGR252W"/>
    <property type="gene ID" value="YGR252W"/>
</dbReference>
<dbReference type="GeneID" id="853167"/>
<dbReference type="KEGG" id="sce:YGR252W"/>
<dbReference type="AGR" id="SGD:S000003484"/>
<dbReference type="SGD" id="S000003484">
    <property type="gene designation" value="GCN5"/>
</dbReference>
<dbReference type="VEuPathDB" id="FungiDB:YGR252W"/>
<dbReference type="eggNOG" id="KOG1472">
    <property type="taxonomic scope" value="Eukaryota"/>
</dbReference>
<dbReference type="GeneTree" id="ENSGT00940000168538"/>
<dbReference type="HOGENOM" id="CLU_015741_1_1_1"/>
<dbReference type="InParanoid" id="Q03330"/>
<dbReference type="OMA" id="HQPPKEW"/>
<dbReference type="OrthoDB" id="1937912at2759"/>
<dbReference type="BioCyc" id="YEAST:G3O-30925-MONOMER"/>
<dbReference type="Reactome" id="R-SCE-5689880">
    <property type="pathway name" value="Ub-specific processing proteases"/>
</dbReference>
<dbReference type="Reactome" id="R-SCE-9018519">
    <property type="pathway name" value="Estrogen-dependent gene expression"/>
</dbReference>
<dbReference type="SABIO-RK" id="Q03330"/>
<dbReference type="BioGRID-ORCS" id="853167">
    <property type="hits" value="1 hit in 10 CRISPR screens"/>
</dbReference>
<dbReference type="EvolutionaryTrace" id="Q03330"/>
<dbReference type="PRO" id="PR:Q03330"/>
<dbReference type="Proteomes" id="UP000002311">
    <property type="component" value="Chromosome VII"/>
</dbReference>
<dbReference type="RNAct" id="Q03330">
    <property type="molecule type" value="protein"/>
</dbReference>
<dbReference type="GO" id="GO:0140671">
    <property type="term" value="C:ADA complex"/>
    <property type="evidence" value="ECO:0000314"/>
    <property type="project" value="SGD"/>
</dbReference>
<dbReference type="GO" id="GO:0000775">
    <property type="term" value="C:chromosome, centromeric region"/>
    <property type="evidence" value="ECO:0000314"/>
    <property type="project" value="SGD"/>
</dbReference>
<dbReference type="GO" id="GO:0005829">
    <property type="term" value="C:cytosol"/>
    <property type="evidence" value="ECO:0000314"/>
    <property type="project" value="SGD"/>
</dbReference>
<dbReference type="GO" id="GO:0000123">
    <property type="term" value="C:histone acetyltransferase complex"/>
    <property type="evidence" value="ECO:0000318"/>
    <property type="project" value="GO_Central"/>
</dbReference>
<dbReference type="GO" id="GO:0005634">
    <property type="term" value="C:nucleus"/>
    <property type="evidence" value="ECO:0000314"/>
    <property type="project" value="SGD"/>
</dbReference>
<dbReference type="GO" id="GO:0000124">
    <property type="term" value="C:SAGA complex"/>
    <property type="evidence" value="ECO:0000314"/>
    <property type="project" value="SGD"/>
</dbReference>
<dbReference type="GO" id="GO:0046695">
    <property type="term" value="C:SLIK (SAGA-like) complex"/>
    <property type="evidence" value="ECO:0000314"/>
    <property type="project" value="SGD"/>
</dbReference>
<dbReference type="GO" id="GO:0004402">
    <property type="term" value="F:histone acetyltransferase activity"/>
    <property type="evidence" value="ECO:0000314"/>
    <property type="project" value="UniProtKB"/>
</dbReference>
<dbReference type="GO" id="GO:0140068">
    <property type="term" value="F:histone crotonyltransferase activity"/>
    <property type="evidence" value="ECO:0000314"/>
    <property type="project" value="SGD"/>
</dbReference>
<dbReference type="GO" id="GO:0010484">
    <property type="term" value="F:histone H3 acetyltransferase activity"/>
    <property type="evidence" value="ECO:0000314"/>
    <property type="project" value="SGD"/>
</dbReference>
<dbReference type="GO" id="GO:0140566">
    <property type="term" value="F:histone reader activity"/>
    <property type="evidence" value="ECO:0000314"/>
    <property type="project" value="GO_Central"/>
</dbReference>
<dbReference type="GO" id="GO:0070577">
    <property type="term" value="F:lysine-acetylated histone binding"/>
    <property type="evidence" value="ECO:0000314"/>
    <property type="project" value="SGD"/>
</dbReference>
<dbReference type="GO" id="GO:0061733">
    <property type="term" value="F:protein-lysine-acetyltransferase activity"/>
    <property type="evidence" value="ECO:0000314"/>
    <property type="project" value="GO_Central"/>
</dbReference>
<dbReference type="GO" id="GO:0003712">
    <property type="term" value="F:transcription coregulator activity"/>
    <property type="evidence" value="ECO:0000314"/>
    <property type="project" value="SGD"/>
</dbReference>
<dbReference type="GO" id="GO:0006325">
    <property type="term" value="P:chromatin organization"/>
    <property type="evidence" value="ECO:0000314"/>
    <property type="project" value="SGD"/>
</dbReference>
<dbReference type="GO" id="GO:0006338">
    <property type="term" value="P:chromatin remodeling"/>
    <property type="evidence" value="ECO:0000315"/>
    <property type="project" value="SGD"/>
</dbReference>
<dbReference type="GO" id="GO:0045944">
    <property type="term" value="P:positive regulation of transcription by RNA polymerase II"/>
    <property type="evidence" value="ECO:0000318"/>
    <property type="project" value="GO_Central"/>
</dbReference>
<dbReference type="GO" id="GO:0032968">
    <property type="term" value="P:positive regulation of transcription elongation by RNA polymerase II"/>
    <property type="evidence" value="ECO:0000315"/>
    <property type="project" value="SGD"/>
</dbReference>
<dbReference type="GO" id="GO:0006357">
    <property type="term" value="P:regulation of transcription by RNA polymerase II"/>
    <property type="evidence" value="ECO:0000314"/>
    <property type="project" value="GO_Central"/>
</dbReference>
<dbReference type="CDD" id="cd05509">
    <property type="entry name" value="Bromo_gcn5_like"/>
    <property type="match status" value="1"/>
</dbReference>
<dbReference type="CDD" id="cd04301">
    <property type="entry name" value="NAT_SF"/>
    <property type="match status" value="1"/>
</dbReference>
<dbReference type="FunFam" id="1.20.920.10:FF:000046">
    <property type="entry name" value="Histone acetyltransferase GCN5"/>
    <property type="match status" value="1"/>
</dbReference>
<dbReference type="FunFam" id="3.40.630.30:FF:000004">
    <property type="entry name" value="Histone acetyltransferase KAT2A"/>
    <property type="match status" value="1"/>
</dbReference>
<dbReference type="Gene3D" id="3.40.630.30">
    <property type="match status" value="1"/>
</dbReference>
<dbReference type="Gene3D" id="1.20.920.10">
    <property type="entry name" value="Bromodomain-like"/>
    <property type="match status" value="1"/>
</dbReference>
<dbReference type="InterPro" id="IPR016181">
    <property type="entry name" value="Acyl_CoA_acyltransferase"/>
</dbReference>
<dbReference type="InterPro" id="IPR001487">
    <property type="entry name" value="Bromodomain"/>
</dbReference>
<dbReference type="InterPro" id="IPR036427">
    <property type="entry name" value="Bromodomain-like_sf"/>
</dbReference>
<dbReference type="InterPro" id="IPR018359">
    <property type="entry name" value="Bromodomain_CS"/>
</dbReference>
<dbReference type="InterPro" id="IPR037800">
    <property type="entry name" value="GCN5"/>
</dbReference>
<dbReference type="InterPro" id="IPR000182">
    <property type="entry name" value="GNAT_dom"/>
</dbReference>
<dbReference type="PANTHER" id="PTHR45750">
    <property type="entry name" value="GH11602P"/>
    <property type="match status" value="1"/>
</dbReference>
<dbReference type="PANTHER" id="PTHR45750:SF3">
    <property type="entry name" value="HISTONE ACETYLTRANSFERASE"/>
    <property type="match status" value="1"/>
</dbReference>
<dbReference type="Pfam" id="PF00583">
    <property type="entry name" value="Acetyltransf_1"/>
    <property type="match status" value="1"/>
</dbReference>
<dbReference type="Pfam" id="PF00439">
    <property type="entry name" value="Bromodomain"/>
    <property type="match status" value="1"/>
</dbReference>
<dbReference type="PRINTS" id="PR00503">
    <property type="entry name" value="BROMODOMAIN"/>
</dbReference>
<dbReference type="SMART" id="SM00297">
    <property type="entry name" value="BROMO"/>
    <property type="match status" value="1"/>
</dbReference>
<dbReference type="SUPFAM" id="SSF55729">
    <property type="entry name" value="Acyl-CoA N-acyltransferases (Nat)"/>
    <property type="match status" value="1"/>
</dbReference>
<dbReference type="SUPFAM" id="SSF47370">
    <property type="entry name" value="Bromodomain"/>
    <property type="match status" value="1"/>
</dbReference>
<dbReference type="PROSITE" id="PS00633">
    <property type="entry name" value="BROMODOMAIN_1"/>
    <property type="match status" value="1"/>
</dbReference>
<dbReference type="PROSITE" id="PS50014">
    <property type="entry name" value="BROMODOMAIN_2"/>
    <property type="match status" value="1"/>
</dbReference>
<dbReference type="PROSITE" id="PS51186">
    <property type="entry name" value="GNAT"/>
    <property type="match status" value="1"/>
</dbReference>
<name>GCN5_YEAST</name>
<protein>
    <recommendedName>
        <fullName evidence="35">Histone acetyltransferase GCN5</fullName>
        <ecNumber evidence="5">2.3.1.48</ecNumber>
    </recommendedName>
    <alternativeName>
        <fullName evidence="35">Histone crotonyltransferase GCN5</fullName>
        <ecNumber evidence="26">2.3.1.-</ecNumber>
    </alternativeName>
    <alternativeName>
        <fullName>SAGA complex subunit GCN5</fullName>
    </alternativeName>
</protein>
<organism>
    <name type="scientific">Saccharomyces cerevisiae (strain ATCC 204508 / S288c)</name>
    <name type="common">Baker's yeast</name>
    <dbReference type="NCBI Taxonomy" id="559292"/>
    <lineage>
        <taxon>Eukaryota</taxon>
        <taxon>Fungi</taxon>
        <taxon>Dikarya</taxon>
        <taxon>Ascomycota</taxon>
        <taxon>Saccharomycotina</taxon>
        <taxon>Saccharomycetes</taxon>
        <taxon>Saccharomycetales</taxon>
        <taxon>Saccharomycetaceae</taxon>
        <taxon>Saccharomyces</taxon>
    </lineage>
</organism>
<accession>Q03330</accession>
<accession>D6VV32</accession>
<accession>Q6B165</accession>
<gene>
    <name evidence="33 36" type="primary">GCN5</name>
    <name evidence="34" type="synonym">ADA4</name>
    <name evidence="36" type="synonym">SWI9</name>
    <name type="ordered locus">YGR252W</name>
</gene>
<reference key="1">
    <citation type="journal article" date="1992" name="EMBO J.">
        <title>Two distinct yeast transcriptional activators require the function of the GCN5 protein to promote normal levels of transcription.</title>
        <authorList>
            <person name="Georgakopoulos T."/>
            <person name="Thireos G."/>
        </authorList>
    </citation>
    <scope>NUCLEOTIDE SEQUENCE [GENOMIC DNA]</scope>
</reference>
<reference key="2">
    <citation type="journal article" date="1997" name="Nature">
        <title>The nucleotide sequence of Saccharomyces cerevisiae chromosome VII.</title>
        <authorList>
            <person name="Tettelin H."/>
            <person name="Agostoni-Carbone M.L."/>
            <person name="Albermann K."/>
            <person name="Albers M."/>
            <person name="Arroyo J."/>
            <person name="Backes U."/>
            <person name="Barreiros T."/>
            <person name="Bertani I."/>
            <person name="Bjourson A.J."/>
            <person name="Brueckner M."/>
            <person name="Bruschi C.V."/>
            <person name="Carignani G."/>
            <person name="Castagnoli L."/>
            <person name="Cerdan E."/>
            <person name="Clemente M.L."/>
            <person name="Coblenz A."/>
            <person name="Coglievina M."/>
            <person name="Coissac E."/>
            <person name="Defoor E."/>
            <person name="Del Bino S."/>
            <person name="Delius H."/>
            <person name="Delneri D."/>
            <person name="de Wergifosse P."/>
            <person name="Dujon B."/>
            <person name="Durand P."/>
            <person name="Entian K.-D."/>
            <person name="Eraso P."/>
            <person name="Escribano V."/>
            <person name="Fabiani L."/>
            <person name="Fartmann B."/>
            <person name="Feroli F."/>
            <person name="Feuermann M."/>
            <person name="Frontali L."/>
            <person name="Garcia-Gonzalez M."/>
            <person name="Garcia-Saez M.I."/>
            <person name="Goffeau A."/>
            <person name="Guerreiro P."/>
            <person name="Hani J."/>
            <person name="Hansen M."/>
            <person name="Hebling U."/>
            <person name="Hernandez K."/>
            <person name="Heumann K."/>
            <person name="Hilger F."/>
            <person name="Hofmann B."/>
            <person name="Indge K.J."/>
            <person name="James C.M."/>
            <person name="Klima R."/>
            <person name="Koetter P."/>
            <person name="Kramer B."/>
            <person name="Kramer W."/>
            <person name="Lauquin G."/>
            <person name="Leuther H."/>
            <person name="Louis E.J."/>
            <person name="Maillier E."/>
            <person name="Marconi A."/>
            <person name="Martegani E."/>
            <person name="Mazon M.J."/>
            <person name="Mazzoni C."/>
            <person name="McReynolds A.D.K."/>
            <person name="Melchioretto P."/>
            <person name="Mewes H.-W."/>
            <person name="Minenkova O."/>
            <person name="Mueller-Auer S."/>
            <person name="Nawrocki A."/>
            <person name="Netter P."/>
            <person name="Neu R."/>
            <person name="Nombela C."/>
            <person name="Oliver S.G."/>
            <person name="Panzeri L."/>
            <person name="Paoluzi S."/>
            <person name="Plevani P."/>
            <person name="Portetelle D."/>
            <person name="Portillo F."/>
            <person name="Potier S."/>
            <person name="Purnelle B."/>
            <person name="Rieger M."/>
            <person name="Riles L."/>
            <person name="Rinaldi T."/>
            <person name="Robben J."/>
            <person name="Rodrigues-Pousada C."/>
            <person name="Rodriguez-Belmonte E."/>
            <person name="Rodriguez-Torres A.M."/>
            <person name="Rose M."/>
            <person name="Ruzzi M."/>
            <person name="Saliola M."/>
            <person name="Sanchez-Perez M."/>
            <person name="Schaefer B."/>
            <person name="Schaefer M."/>
            <person name="Scharfe M."/>
            <person name="Schmidheini T."/>
            <person name="Schreer A."/>
            <person name="Skala J."/>
            <person name="Souciet J.-L."/>
            <person name="Steensma H.Y."/>
            <person name="Talla E."/>
            <person name="Thierry A."/>
            <person name="Vandenbol M."/>
            <person name="van der Aart Q.J.M."/>
            <person name="Van Dyck L."/>
            <person name="Vanoni M."/>
            <person name="Verhasselt P."/>
            <person name="Voet M."/>
            <person name="Volckaert G."/>
            <person name="Wambutt R."/>
            <person name="Watson M.D."/>
            <person name="Weber N."/>
            <person name="Wedler E."/>
            <person name="Wedler H."/>
            <person name="Wipfli P."/>
            <person name="Wolf K."/>
            <person name="Wright L.F."/>
            <person name="Zaccaria P."/>
            <person name="Zimmermann M."/>
            <person name="Zollner A."/>
            <person name="Kleine K."/>
        </authorList>
    </citation>
    <scope>NUCLEOTIDE SEQUENCE [LARGE SCALE GENOMIC DNA]</scope>
    <source>
        <strain>ATCC 204508 / S288c</strain>
    </source>
</reference>
<reference key="3">
    <citation type="journal article" date="2014" name="G3 (Bethesda)">
        <title>The reference genome sequence of Saccharomyces cerevisiae: Then and now.</title>
        <authorList>
            <person name="Engel S.R."/>
            <person name="Dietrich F.S."/>
            <person name="Fisk D.G."/>
            <person name="Binkley G."/>
            <person name="Balakrishnan R."/>
            <person name="Costanzo M.C."/>
            <person name="Dwight S.S."/>
            <person name="Hitz B.C."/>
            <person name="Karra K."/>
            <person name="Nash R.S."/>
            <person name="Weng S."/>
            <person name="Wong E.D."/>
            <person name="Lloyd P."/>
            <person name="Skrzypek M.S."/>
            <person name="Miyasato S.R."/>
            <person name="Simison M."/>
            <person name="Cherry J.M."/>
        </authorList>
    </citation>
    <scope>GENOME REANNOTATION</scope>
    <source>
        <strain>ATCC 204508 / S288c</strain>
    </source>
</reference>
<reference key="4">
    <citation type="journal article" date="2007" name="Genome Res.">
        <title>Approaching a complete repository of sequence-verified protein-encoding clones for Saccharomyces cerevisiae.</title>
        <authorList>
            <person name="Hu Y."/>
            <person name="Rolfs A."/>
            <person name="Bhullar B."/>
            <person name="Murthy T.V.S."/>
            <person name="Zhu C."/>
            <person name="Berger M.F."/>
            <person name="Camargo A.A."/>
            <person name="Kelley F."/>
            <person name="McCarron S."/>
            <person name="Jepson D."/>
            <person name="Richardson A."/>
            <person name="Raphael J."/>
            <person name="Moreira D."/>
            <person name="Taycher E."/>
            <person name="Zuo D."/>
            <person name="Mohr S."/>
            <person name="Kane M.F."/>
            <person name="Williamson J."/>
            <person name="Simpson A.J.G."/>
            <person name="Bulyk M.L."/>
            <person name="Harlow E."/>
            <person name="Marsischky G."/>
            <person name="Kolodner R.D."/>
            <person name="LaBaer J."/>
        </authorList>
    </citation>
    <scope>NUCLEOTIDE SEQUENCE [GENOMIC DNA]</scope>
    <source>
        <strain>ATCC 204508 / S288c</strain>
    </source>
</reference>
<reference key="5">
    <citation type="journal article" date="1997" name="Yeast">
        <title>Analysis of a 17.9 kb region from Saccharomyces cerevisiae chromosome VII reveals the presence of eight open reading frames, including BRF1 (TFIIIB70) and GCN5 genes.</title>
        <authorList>
            <person name="Feroli F."/>
            <person name="Carignani G."/>
            <person name="Pavanello A."/>
            <person name="Guerreiro P."/>
            <person name="Azevedo D."/>
            <person name="Rodrigues-Pousada C."/>
            <person name="Melchioretto P."/>
            <person name="Panzeri L."/>
            <person name="Agostoni Carbone M.L."/>
        </authorList>
    </citation>
    <scope>NUCLEOTIDE SEQUENCE [GENOMIC DNA] OF 1-170</scope>
    <source>
        <strain>ATCC 96604 / S288c / FY1679</strain>
    </source>
</reference>
<reference key="6">
    <citation type="journal article" date="1997" name="Yeast">
        <title>Sequence analysis of a 10.5 kb DNA fragment from the yeast chromosome VII reveals the presence of three new open reading frames and of a tRNAThr gene.</title>
        <authorList>
            <person name="Mazzoni C."/>
            <person name="Ruzzi M."/>
            <person name="Rinaldi T."/>
            <person name="Solinas F."/>
            <person name="Montebove F."/>
            <person name="Frontali L."/>
        </authorList>
    </citation>
    <scope>NUCLEOTIDE SEQUENCE [GENOMIC DNA] OF 170-439</scope>
    <source>
        <strain>ATCC 204508 / S288c</strain>
    </source>
</reference>
<reference key="7">
    <citation type="journal article" date="1994" name="EMBO J.">
        <title>Functional similarity and physical association between GCN5 and ADA2: putative transcriptional adaptors.</title>
        <authorList>
            <person name="Marcus G.A."/>
            <person name="Silverman N."/>
            <person name="Berger S.L."/>
            <person name="Horiuchi J."/>
            <person name="Guarente L."/>
        </authorList>
    </citation>
    <scope>INTERACTION WITH ADA2</scope>
</reference>
<reference key="8">
    <citation type="journal article" date="1995" name="Mol. Cell. Biol.">
        <title>ADA3, a putative transcriptional adaptor, consists of two separable domains and interacts with ADA2 and GCN5 in a trimeric complex.</title>
        <authorList>
            <person name="Horiuchi J."/>
            <person name="Silverman N."/>
            <person name="Marcus G.A."/>
            <person name="Guarente L."/>
        </authorList>
    </citation>
    <scope>SUBUNIT</scope>
</reference>
<reference key="9">
    <citation type="journal article" date="1997" name="Genes Dev.">
        <title>Yeast Gcn5 functions in two multisubunit complexes to acetylate nucleosomal histones: characterization of an Ada complex and the SAGA (Spt/Ada) complex.</title>
        <authorList>
            <person name="Grant P.A."/>
            <person name="Duggan L."/>
            <person name="Cote J."/>
            <person name="Roberts S.M."/>
            <person name="Brownell J.E."/>
            <person name="Candau R."/>
            <person name="Ohba R."/>
            <person name="Owen-Hughes T."/>
            <person name="Allis C.D."/>
            <person name="Winston F."/>
            <person name="Berger S.L."/>
            <person name="Workman J.L."/>
        </authorList>
    </citation>
    <scope>FUNCTION</scope>
    <scope>SUBUNIT</scope>
</reference>
<reference key="10">
    <citation type="journal article" date="1997" name="Mol. Cell. Biol.">
        <title>ADA1, a novel component of the ADA/GCN5 complex, has broader effects than GCN5, ADA2, or ADA3.</title>
        <authorList>
            <person name="Horiuchi J."/>
            <person name="Silverman N."/>
            <person name="Pina B."/>
            <person name="Marcus G.A."/>
            <person name="Guarente L."/>
        </authorList>
    </citation>
    <scope>IDENTIFICATION IN THE ADA/GCN5 COMPLEX</scope>
    <source>
        <strain>ATCC MYA-3516 / BWG1-7A</strain>
    </source>
</reference>
<reference key="11">
    <citation type="journal article" date="1998" name="Cell">
        <title>A subset of TAF(II)s are integral components of the SAGA complex required for nucleosome acetylation and transcriptional stimulation.</title>
        <authorList>
            <person name="Grant P.A."/>
            <person name="Schieltz D."/>
            <person name="Pray-Grant M.G."/>
            <person name="Steger D.J."/>
            <person name="Reese J.C."/>
            <person name="Yates J.R. III"/>
            <person name="Workman J.L."/>
        </authorList>
    </citation>
    <scope>IDENTIFICATION IN THE SAGA COMPLEX</scope>
</reference>
<reference key="12">
    <citation type="journal article" date="1998" name="Mol. Cell">
        <title>The ATM-related cofactor Tra1 is a component of the purified SAGA complex.</title>
        <authorList>
            <person name="Grant P.A."/>
            <person name="Schieltz D."/>
            <person name="Pray-Grant M.G."/>
            <person name="Yates J.R. III"/>
            <person name="Workman J.L."/>
        </authorList>
    </citation>
    <scope>IDENTIFICATION IN A SAGA COMPLEX WITH SPT2; SPT7; SPT8; SPT20; HFI1 ADA2; ADA3 AND TRA1</scope>
</reference>
<reference key="13">
    <citation type="journal article" date="1999" name="J. Biol. Chem.">
        <title>Expanded lysine acetylation specificity of Gcn5 in native complexes.</title>
        <authorList>
            <person name="Grant P.A."/>
            <person name="Eberharter A."/>
            <person name="John S."/>
            <person name="Cook R.G."/>
            <person name="Turner B.M."/>
            <person name="Workman J.L."/>
        </authorList>
    </citation>
    <scope>FUNCTION IN HISTONE ACETYLATION AT THE SAGA COMPLEX</scope>
    <scope>FUNCTION IN HISTONE ACETYLATION AT THE ADA COMPLEX</scope>
    <scope>CATALYTIC ACTIVITY</scope>
</reference>
<reference key="14">
    <citation type="journal article" date="1999" name="Mol. Cell">
        <title>Transcriptional activation by Gcn4p involves independent interactions with the SWI/SNF complex and the SRB/mediator.</title>
        <authorList>
            <person name="Natarajan K."/>
            <person name="Jackson B.M."/>
            <person name="Zhou H."/>
            <person name="Winston F."/>
            <person name="Hinnebusch A.G."/>
        </authorList>
    </citation>
    <scope>DISRUPTION PHENOTYPE</scope>
</reference>
<reference key="15">
    <citation type="journal article" date="1999" name="Mol. Cell. Biol.">
        <title>The ADA complex is a distinct histone acetyltransferase complex in Saccharomyces cerevisiae.</title>
        <authorList>
            <person name="Eberharter A."/>
            <person name="Sterner D.E."/>
            <person name="Schieltz D."/>
            <person name="Hassan A."/>
            <person name="Yates J.R. III"/>
            <person name="Berger S.L."/>
            <person name="Workman J.L."/>
        </authorList>
    </citation>
    <scope>FUNCTION</scope>
    <scope>IDENTIFICATION IN THE ADA COMPLEX</scope>
    <scope>IDENTIFICATION BY MASS SPECTROMETRY</scope>
</reference>
<reference key="16">
    <citation type="journal article" date="2000" name="Annu. Rev. Biophys. Biomol. Struct.">
        <title>GCN5-related N-acetyltransferases: a structural overview.</title>
        <authorList>
            <person name="Dyda F."/>
            <person name="Klein D.C."/>
            <person name="Hickman A.B."/>
        </authorList>
    </citation>
    <scope>REVIEW</scope>
</reference>
<reference key="17">
    <citation type="journal article" date="2000" name="Nature">
        <title>Redundant roles for the TFIID and SAGA complexes in global transcription.</title>
        <authorList>
            <person name="Lee T.I."/>
            <person name="Causton H.C."/>
            <person name="Holstege F.C."/>
            <person name="Shen W.C."/>
            <person name="Hannett N."/>
            <person name="Jennings E.G."/>
            <person name="Winston F."/>
            <person name="Green M.R."/>
            <person name="Young R.A."/>
        </authorList>
    </citation>
    <scope>FUNCTION</scope>
</reference>
<reference key="18">
    <citation type="journal article" date="2001" name="Mol. Cell">
        <title>Highly specific antibodies determine histone acetylation site usage in yeast heterochromatin and euchromatin.</title>
        <authorList>
            <person name="Suka N."/>
            <person name="Suka Y."/>
            <person name="Carmen A.A."/>
            <person name="Wu J."/>
            <person name="Grunstein M."/>
        </authorList>
    </citation>
    <scope>FUNCTION IN ACETYLATION OF HISTONES H2B AND H3</scope>
</reference>
<reference key="19">
    <citation type="journal article" date="2002" name="Mol. Cell. Biol.">
        <title>The novel SLIK histone acetyltransferase complex functions in the yeast retrograde response pathway.</title>
        <authorList>
            <person name="Pray-Grant M.G."/>
            <person name="Schieltz D."/>
            <person name="McMahon S.J."/>
            <person name="Wood J.M."/>
            <person name="Kennedy E.L."/>
            <person name="Cook R.G."/>
            <person name="Workman J.L."/>
            <person name="Yates J.R. III"/>
            <person name="Grant P.A."/>
        </authorList>
    </citation>
    <scope>FUNCTION</scope>
    <scope>IDENTIFICATION IN THE SLIK COMPLEX</scope>
</reference>
<reference key="20">
    <citation type="journal article" date="2002" name="Proc. Natl. Acad. Sci. U.S.A.">
        <title>SALSA, a variant of yeast SAGA, contains truncated Spt7, which correlates with activated transcription.</title>
        <authorList>
            <person name="Sterner D.E."/>
            <person name="Belotserkovskaya R."/>
            <person name="Berger S.L."/>
        </authorList>
    </citation>
    <scope>FUNCTION</scope>
    <scope>IDENTIFICATION IN THE SALSA COMPLEX</scope>
</reference>
<reference key="21">
    <citation type="journal article" date="2003" name="Nature">
        <title>Global analysis of protein expression in yeast.</title>
        <authorList>
            <person name="Ghaemmaghami S."/>
            <person name="Huh W.-K."/>
            <person name="Bower K."/>
            <person name="Howson R.W."/>
            <person name="Belle A."/>
            <person name="Dephoure N."/>
            <person name="O'Shea E.K."/>
            <person name="Weissman J.S."/>
        </authorList>
    </citation>
    <scope>LEVEL OF PROTEIN EXPRESSION [LARGE SCALE ANALYSIS]</scope>
</reference>
<reference key="22">
    <citation type="journal article" date="2004" name="Mol. Cell. Biol.">
        <title>Drosophila Ada2b is required for viability and normal histone H3 acetylation.</title>
        <authorList>
            <person name="Qi D."/>
            <person name="Larsson J."/>
            <person name="Mannervik M."/>
        </authorList>
    </citation>
    <scope>FUNCTION</scope>
    <scope>DISRUPTION PHENOTYPE</scope>
</reference>
<reference key="23">
    <citation type="journal article" date="2005" name="Nature">
        <title>Chd1 chromodomain links histone H3 methylation with SAGA- and SLIK-dependent acetylation.</title>
        <authorList>
            <person name="Pray-Grant M.G."/>
            <person name="Daniel J.A."/>
            <person name="Schieltz D."/>
            <person name="Yates J.R. III"/>
            <person name="Grant P.A."/>
        </authorList>
    </citation>
    <scope>FUNCTION</scope>
    <scope>IDENTIFICATION IN THE SLIK COMPLEX</scope>
</reference>
<reference key="24">
    <citation type="journal article" date="2006" name="Genes Dev.">
        <title>Telomeric heterochromatin boundaries require NuA4-dependent acetylation of histone variant H2A.Z in Saccharomyces cerevisiae.</title>
        <authorList>
            <person name="Babiarz J.E."/>
            <person name="Halley J.E."/>
            <person name="Rine J."/>
        </authorList>
    </citation>
    <scope>FUNCTION IN HTZ1 ACETYLATION</scope>
</reference>
<reference key="25">
    <citation type="journal article" date="2006" name="Genes Dev.">
        <title>Acetylation of H2AZ Lys 14 is associated with genome-wide gene activity in yeast.</title>
        <authorList>
            <person name="Millar C.B."/>
            <person name="Xu F."/>
            <person name="Zhang K."/>
            <person name="Grunstein M."/>
        </authorList>
    </citation>
    <scope>FUNCTION IN HTZ1 ACETYLATION</scope>
</reference>
<reference key="26">
    <citation type="journal article" date="2007" name="J. Biol. Chem.">
        <title>Identification of histone H3 lysine 36 acetylation as a highly conserved histone modification.</title>
        <authorList>
            <person name="Morris S.A."/>
            <person name="Rao B."/>
            <person name="Garcia B.A."/>
            <person name="Hake S.B."/>
            <person name="Diaz R.L."/>
            <person name="Shabanowitz J."/>
            <person name="Hunt D.F."/>
            <person name="Allis C.D."/>
            <person name="Lieb J.D."/>
            <person name="Strahl B.D."/>
        </authorList>
    </citation>
    <scope>FUNCTION IN ACETYLATION OF HISTONE H3</scope>
</reference>
<reference key="27">
    <citation type="journal article" date="2008" name="Mol. Cell. Biol.">
        <title>Gcn5p plays an important role in centromere kinetochore function in budding yeast.</title>
        <authorList>
            <person name="Vernarecci S."/>
            <person name="Ornaghi P."/>
            <person name="Bagu A."/>
            <person name="Cundari E."/>
            <person name="Ballario P."/>
            <person name="Filetici P."/>
        </authorList>
    </citation>
    <scope>FUNCTION</scope>
</reference>
<reference key="28">
    <citation type="journal article" date="2008" name="Mol. Cell. Biol.">
        <title>Chaperone control of the activity and specificity of the histone H3 acetyltransferase Rtt109.</title>
        <authorList>
            <person name="Fillingham J."/>
            <person name="Recht J."/>
            <person name="Silva A.C."/>
            <person name="Suter B."/>
            <person name="Emili A."/>
            <person name="Stagljar I."/>
            <person name="Krogan N.J."/>
            <person name="Allis C.D."/>
            <person name="Keogh M.C."/>
            <person name="Greenblatt J.F."/>
        </authorList>
    </citation>
    <scope>FUNCTION</scope>
</reference>
<reference key="29">
    <citation type="journal article" date="2009" name="Mol. Cell. Biol.">
        <title>NuA4 lysine acetyltransferase Esa1 is targeted to coding regions and stimulates transcription elongation with Gcn5.</title>
        <authorList>
            <person name="Ginsburg D.S."/>
            <person name="Govind C.K."/>
            <person name="Hinnebusch A.G."/>
        </authorList>
    </citation>
    <scope>FUNCTION</scope>
</reference>
<reference key="30">
    <citation type="journal article" date="2010" name="PLoS ONE">
        <title>Biochemical profiling of histone binding selectivity of the yeast bromodomain family.</title>
        <authorList>
            <person name="Zhang Q."/>
            <person name="Chakravarty S."/>
            <person name="Ghersi D."/>
            <person name="Zeng L."/>
            <person name="Plotnikov A.N."/>
            <person name="Sanchez R."/>
            <person name="Zhou M.M."/>
        </authorList>
    </citation>
    <scope>DOMAIN</scope>
</reference>
<reference key="31">
    <citation type="journal article" date="2012" name="Cell Biosci.">
        <title>The nuclear localization of SWI/SNF proteins is subjected to oxygen regulation.</title>
        <authorList>
            <person name="Dastidar R.G."/>
            <person name="Hooda J."/>
            <person name="Shah A."/>
            <person name="Cao T.M."/>
            <person name="Henke R.M."/>
            <person name="Zhang L."/>
        </authorList>
    </citation>
    <scope>SUBCELLULAR LOCATION</scope>
</reference>
<reference key="32">
    <citation type="journal article" date="2014" name="EMBO J.">
        <title>Architecture of the Saccharomyces cerevisiae SAGA transcription coactivator complex.</title>
        <authorList>
            <person name="Han Y."/>
            <person name="Luo J."/>
            <person name="Ranish J."/>
            <person name="Hahn S."/>
        </authorList>
    </citation>
    <scope>SUBUNIT</scope>
</reference>
<reference key="33">
    <citation type="journal article" date="2017" name="Mol. Cell">
        <title>SAGA is a general cofactor for RNA polymerase II transcription.</title>
        <authorList>
            <person name="Baptista T."/>
            <person name="Gruenberg S."/>
            <person name="Minoungou N."/>
            <person name="Koster M.J.E."/>
            <person name="Timmers H.T.M."/>
            <person name="Hahn S."/>
            <person name="Devys D."/>
            <person name="Tora L."/>
        </authorList>
    </citation>
    <scope>FUNCTION</scope>
</reference>
<reference key="34">
    <citation type="journal article" date="2019" name="J. Biol. Chem.">
        <title>Gcn5 and Esa1 function as histone crotonyltransferases to regulate crotonylation-dependent transcription.</title>
        <authorList>
            <person name="Kollenstart L."/>
            <person name="de Groot A.J.L."/>
            <person name="Janssen G.M.C."/>
            <person name="Cheng X."/>
            <person name="Vreeken K."/>
            <person name="Martino F."/>
            <person name="Cote J."/>
            <person name="van Veelen P.A."/>
            <person name="van Attikum H."/>
        </authorList>
    </citation>
    <scope>FUNCTION</scope>
    <scope>CATALYTIC ACTIVITY</scope>
</reference>
<reference key="35">
    <citation type="journal article" date="2021" name="J. Biol. Chem.">
        <title>SAGA and SAGA-like SLIK transcriptional coactivators are structurally and biochemically equivalent.</title>
        <authorList>
            <person name="Adamus K."/>
            <person name="Reboul C."/>
            <person name="Voss J."/>
            <person name="Huang C."/>
            <person name="Schittenhelm R.B."/>
            <person name="Le S.N."/>
            <person name="Ellisdon A.M."/>
            <person name="Elmlund H."/>
            <person name="Boudes M."/>
            <person name="Elmlund D."/>
        </authorList>
    </citation>
    <scope>FUNCTION</scope>
    <scope>SUBUNIT</scope>
</reference>
<reference evidence="38" key="36">
    <citation type="journal article" date="1999" name="Proc. Natl. Acad. Sci. U.S.A.">
        <title>Crystal structure and mechanism of histone acetylation of the yeast GCN5 transcriptional coactivator.</title>
        <authorList>
            <person name="Trievel R.C."/>
            <person name="Rojas J.R."/>
            <person name="Sterner D.E."/>
            <person name="Venkataramani R.N."/>
            <person name="Wang L."/>
            <person name="Zhou J."/>
            <person name="Allis C.D."/>
            <person name="Berger S.L."/>
            <person name="Marmorstein R."/>
        </authorList>
    </citation>
    <scope>X-RAY CRYSTALLOGRAPHY (1.9 ANGSTROMS) OF 99-262</scope>
</reference>
<reference evidence="37" key="37">
    <citation type="journal article" date="2000" name="EMBO J.">
        <title>The structural basis for the recognition of acetylated histone H4 by the bromodomain of histone acetyltransferase gcn5p.</title>
        <authorList>
            <person name="Owen D.J."/>
            <person name="Ornaghi P."/>
            <person name="Yang J.C."/>
            <person name="Lowe N."/>
            <person name="Evans P.R."/>
            <person name="Ballario P."/>
            <person name="Neuhaus D."/>
            <person name="Filetici P."/>
            <person name="Travers A.A."/>
        </authorList>
    </citation>
    <scope>X-RAY CRYSTALLOGRAPHY (1.87 ANGSTROMS) OF 320-439</scope>
</reference>
<reference key="38">
    <citation type="journal article" date="2004" name="Mol. Cell">
        <title>Molecular architecture of the S. cerevisiae SAGA complex.</title>
        <authorList>
            <person name="Wu P.Y."/>
            <person name="Ruhlmann C."/>
            <person name="Winston F."/>
            <person name="Schultz P."/>
        </authorList>
    </citation>
    <scope>3D-STRUCTURE MODELING OF THE SAGA COMPLEX</scope>
</reference>
<reference evidence="39 40" key="39">
    <citation type="journal article" date="2018" name="Proc. Natl. Acad. Sci. U.S.A.">
        <title>Structural basis for activation of SAGA histone acetyltransferase Gcn5 by partner subunit Ada2.</title>
        <authorList>
            <person name="Sun J."/>
            <person name="Paduch M."/>
            <person name="Kim S.A."/>
            <person name="Kramer R.M."/>
            <person name="Barrios A.F."/>
            <person name="Lu V."/>
            <person name="Luke J."/>
            <person name="Usatyuk S."/>
            <person name="Kossiakoff A.A."/>
            <person name="Tan S."/>
        </authorList>
    </citation>
    <scope>X-RAY CRYSTALLOGRAPHY (1.98 ANGSTROMS) OF 67-317</scope>
</reference>
<keyword id="KW-0002">3D-structure</keyword>
<keyword id="KW-0010">Activator</keyword>
<keyword id="KW-0012">Acyltransferase</keyword>
<keyword id="KW-0103">Bromodomain</keyword>
<keyword id="KW-0156">Chromatin regulator</keyword>
<keyword id="KW-0963">Cytoplasm</keyword>
<keyword id="KW-0539">Nucleus</keyword>
<keyword id="KW-1185">Reference proteome</keyword>
<keyword id="KW-0804">Transcription</keyword>
<keyword id="KW-0805">Transcription regulation</keyword>
<keyword id="KW-0808">Transferase</keyword>
<sequence>MVTKHQIEEDHLDGATTDPEVKRVKLENNVEEIQPEQAETNKQEGTDKENKGKFEKETERIGGSEVVTDVEKGIVKFEFDGVEYTFKERPSVVEENEGKIEFRVVNNDNTKENMMVLTGLKNIFQKQLPKMPKEYIARLVYDRSHLSMAVIRKPLTVVGGITYRPFDKREFAEIVFCAISSTEQVRGYGAHLMNHLKDYVRNTSNIKYFLTYADNYAIGYFKKQGFTKEITLDKSIWMGYIKDYEGGTLMQCSMLPRIRYLDAGKILLLQEAALRRKIRTISKSHIVRPGLEQFKDLNNIKPIDPMTIPGLKEAGWTPEMDALAQRPKRGPHDAAIQNILTELQNHAAAWPFLQPVNKEEVPDYYDFIKEPMDLSTMEIKLESNKYQKMEDFIYDARLVFNNCRMYNGENTSYYKYANRLEKFFNNKVKEIPEYSHLID</sequence>
<evidence type="ECO:0000250" key="1">
    <source>
        <dbReference type="UniProtKB" id="Q92830"/>
    </source>
</evidence>
<evidence type="ECO:0000255" key="2">
    <source>
        <dbReference type="PROSITE-ProRule" id="PRU00035"/>
    </source>
</evidence>
<evidence type="ECO:0000255" key="3">
    <source>
        <dbReference type="PROSITE-ProRule" id="PRU00532"/>
    </source>
</evidence>
<evidence type="ECO:0000256" key="4">
    <source>
        <dbReference type="SAM" id="MobiDB-lite"/>
    </source>
</evidence>
<evidence type="ECO:0000269" key="5">
    <source>
    </source>
</evidence>
<evidence type="ECO:0000269" key="6">
    <source>
    </source>
</evidence>
<evidence type="ECO:0000269" key="7">
    <source>
    </source>
</evidence>
<evidence type="ECO:0000269" key="8">
    <source>
    </source>
</evidence>
<evidence type="ECO:0000269" key="9">
    <source>
    </source>
</evidence>
<evidence type="ECO:0000269" key="10">
    <source>
    </source>
</evidence>
<evidence type="ECO:0000269" key="11">
    <source>
    </source>
</evidence>
<evidence type="ECO:0000269" key="12">
    <source>
    </source>
</evidence>
<evidence type="ECO:0000269" key="13">
    <source>
    </source>
</evidence>
<evidence type="ECO:0000269" key="14">
    <source>
    </source>
</evidence>
<evidence type="ECO:0000269" key="15">
    <source>
    </source>
</evidence>
<evidence type="ECO:0000269" key="16">
    <source>
    </source>
</evidence>
<evidence type="ECO:0000269" key="17">
    <source>
    </source>
</evidence>
<evidence type="ECO:0000269" key="18">
    <source>
    </source>
</evidence>
<evidence type="ECO:0000269" key="19">
    <source>
    </source>
</evidence>
<evidence type="ECO:0000269" key="20">
    <source>
    </source>
</evidence>
<evidence type="ECO:0000269" key="21">
    <source>
    </source>
</evidence>
<evidence type="ECO:0000269" key="22">
    <source>
    </source>
</evidence>
<evidence type="ECO:0000269" key="23">
    <source>
    </source>
</evidence>
<evidence type="ECO:0000269" key="24">
    <source>
    </source>
</evidence>
<evidence type="ECO:0000269" key="25">
    <source>
    </source>
</evidence>
<evidence type="ECO:0000269" key="26">
    <source>
    </source>
</evidence>
<evidence type="ECO:0000269" key="27">
    <source>
    </source>
</evidence>
<evidence type="ECO:0000269" key="28">
    <source>
    </source>
</evidence>
<evidence type="ECO:0000269" key="29">
    <source>
    </source>
</evidence>
<evidence type="ECO:0000269" key="30">
    <source>
    </source>
</evidence>
<evidence type="ECO:0000269" key="31">
    <source>
    </source>
</evidence>
<evidence type="ECO:0000269" key="32">
    <source>
    </source>
</evidence>
<evidence type="ECO:0000303" key="33">
    <source>
    </source>
</evidence>
<evidence type="ECO:0000303" key="34">
    <source>
    </source>
</evidence>
<evidence type="ECO:0000305" key="35"/>
<evidence type="ECO:0000312" key="36">
    <source>
        <dbReference type="SGD" id="S000003484"/>
    </source>
</evidence>
<evidence type="ECO:0007744" key="37">
    <source>
        <dbReference type="PDB" id="1E6I"/>
    </source>
</evidence>
<evidence type="ECO:0007744" key="38">
    <source>
        <dbReference type="PDB" id="1YGH"/>
    </source>
</evidence>
<evidence type="ECO:0007744" key="39">
    <source>
        <dbReference type="PDB" id="6CW2"/>
    </source>
</evidence>
<evidence type="ECO:0007744" key="40">
    <source>
        <dbReference type="PDB" id="6CW3"/>
    </source>
</evidence>
<evidence type="ECO:0007829" key="41">
    <source>
        <dbReference type="PDB" id="1E6I"/>
    </source>
</evidence>
<evidence type="ECO:0007829" key="42">
    <source>
        <dbReference type="PDB" id="1YGH"/>
    </source>
</evidence>
<evidence type="ECO:0007829" key="43">
    <source>
        <dbReference type="PDB" id="6CW2"/>
    </source>
</evidence>
<evidence type="ECO:0007829" key="44">
    <source>
        <dbReference type="PDB" id="6CW3"/>
    </source>
</evidence>
<proteinExistence type="evidence at protein level"/>
<comment type="function">
    <text evidence="5 8 9 10 11 14 16 17 18 19 20 21 24 25 26 27 30">Histone acetyltransferase that acetylates histone H2B to form H2BK11ac and H2BK16ac, histone H3 to form H3K9ac, H3K14ac, H3K18ac, H3K23ac, H3K27ac and H3K36ac, with a lower preference histone H4 to form H4K8ac and H4K16ac, and contributes to H2A.Z acetylation. Acetylation of histones gives a specific tag for epigenetic transcription activation and elongation. Operates in concert with certain DNA-binding transcriptional activators such as GCN4 or HAP2/3/4. Its acetyltransferase activity seems to be dependent on the association in different multisubunit complexes (PubMed:10026213, PubMed:11545749, PubMed:16543222, PubMed:16543223, PubMed:17189264, PubMed:19822662). Component of the transcription coactivator SAGA complex. SAGA acts as a general cofactor required for essentially all RNA polymerase II transcription (PubMed:10864329, PubMed:25216679, PubMed:28918903). At the promoters, SAGA is required for transcription pre-initiation complex (PIC) recruitment. It influences RNA polymerase II transcriptional activity through different activities such as TBP interaction (via core/TAF module) and promoter selectivity, interaction with transcription activators (via Tra1/SPT module), and chromatin modification through histone acetylation (via HAT module) and deubiquitination (via DUB module) (PubMed:25216679). SAGA preferentially acetylates histones H3 (to form H3K9ac, H3K14ac, H3K18ac and H3K23ac) and H2B and deubiquitinates histone H2B (PubMed:10026213, PubMed:18458063). SAGA interacts with DNA via upstream activating sequences (UASs) (PubMed:28918903). Also identified in a modified version of SAGA named SALSA or SLIK (PubMed:12186975, PubMed:12446794). The cleavage of SPT7 and the absence of the SPT8 subunit in SLIK neither drive any major conformational differences in its structure compared with SAGA, nor significantly affect HAT, DUB, or DNA-binding activities (PubMed:33864814). Component of the ADA histone acetyltransferase complex, which preferentially acetylates nucleosomal histones H3 (to form H3K14ac and H3K18ac) and H2B (PubMed:10026213, PubMed:9224714). In addition to histone acetyltransferase, can use different acyl-CoA substrates, such as (2E)-butenoyl-CoA (crotonyl-CoA) and is able to mediate histone crotonylation (PubMed:31699900). Controls the metaphase-to-anaphase transition and is required for correct chromosome segregation and centromere/kinetochore function in mitosis (PubMed:18039853). May be involved in response to DNA damage by genotoxic agents (PubMed:15340070).</text>
</comment>
<comment type="catalytic activity">
    <reaction evidence="5">
        <text>L-lysyl-[protein] + acetyl-CoA = N(6)-acetyl-L-lysyl-[protein] + CoA + H(+)</text>
        <dbReference type="Rhea" id="RHEA:45948"/>
        <dbReference type="Rhea" id="RHEA-COMP:9752"/>
        <dbReference type="Rhea" id="RHEA-COMP:10731"/>
        <dbReference type="ChEBI" id="CHEBI:15378"/>
        <dbReference type="ChEBI" id="CHEBI:29969"/>
        <dbReference type="ChEBI" id="CHEBI:57287"/>
        <dbReference type="ChEBI" id="CHEBI:57288"/>
        <dbReference type="ChEBI" id="CHEBI:61930"/>
        <dbReference type="EC" id="2.3.1.48"/>
    </reaction>
</comment>
<comment type="catalytic activity">
    <reaction evidence="26">
        <text>(2E)-butenoyl-CoA + L-lysyl-[protein] = N(6)-(2E)-butenoyl-L-lysyl-[protein] + CoA + H(+)</text>
        <dbReference type="Rhea" id="RHEA:53908"/>
        <dbReference type="Rhea" id="RHEA-COMP:9752"/>
        <dbReference type="Rhea" id="RHEA-COMP:13707"/>
        <dbReference type="ChEBI" id="CHEBI:15378"/>
        <dbReference type="ChEBI" id="CHEBI:29969"/>
        <dbReference type="ChEBI" id="CHEBI:57287"/>
        <dbReference type="ChEBI" id="CHEBI:57332"/>
        <dbReference type="ChEBI" id="CHEBI:137954"/>
    </reaction>
    <physiologicalReaction direction="left-to-right" evidence="26">
        <dbReference type="Rhea" id="RHEA:53909"/>
    </physiologicalReaction>
</comment>
<comment type="subunit">
    <text evidence="6 10 11 13 15 27 28 29 30 31 32">Component of the 1.8 MDa SAGA (Spt-Ada-Gcn5 acetyltransferase) complex, which is composed of 19 subunits TRA1, SPT7, TAF5, NGG1/ADA3, SGF73, SPT20/ADA5, SPT8, TAF12, TAF6, HFI1/ADA1, UBP8, GCN5, ADA2, SPT3, SGF29, TAF10, TAF9, SGF11 and SUS1 (PubMed:9224714, PubMed:9674426, PubMed:9885573). The SAGA complex is composed of 4 modules, namely the HAT (histone acetyltransferase) module (GCN5, ADA2, NGG1/ADA3 and SGF29), the DUB (deubiquitinating) module (UBP8, SGF11, SGF73 and SUS1), the core or TAF (TBP-associated factor) module (TAF5, TAF6, TAF9, TAF10 and TAF12), and the Tra1 or SPT (Suppressor of Ty) module (TRA1, HFI1/ADA1, SPT3, SPT7, SPT8 and SPT20/ADA5). The Tra1/SPT module binds activators, the core module recruits TBP (TATA-binding protein), the HAT module contains the histone H3 acetyltransferase GCN5, and the DUB module comprises the histone H2B deubiquitinase UBP8 (PubMed:15260971). Also identified in an altered form of SAGA, named SALSA (SAGA altered, Spt8 absent) or SLIK (SAGA-like) complex, which contains a C-terminal truncated form of SPT7 and is missing SPT8 (PubMed:12186975, PubMed:12446794, PubMed:15647753). However, it has been shown that the SAGA and SAGA-like SALSA/SLIK transcriptional coactivators are structurally and biochemically equivalent (PubMed:33864814). Component of the 0.8 MDa ADA complex, a HAT complex distinct from SAGA, which at least consists of ADA2, NGG1/ADA3, AHC1, AHC2, SGF29 and GCN5 (PubMed:10490601, PubMed:9224714). Component of an ADA/GCN5 complex that consists of HFI1/ADA1, ADA2, NGG1/ADA3, SPT20/ADA5 and GCN5 and probably is a subcomplex of SAGA (PubMed:9133741, PubMed:9154821).</text>
</comment>
<comment type="interaction">
    <interactant intactId="EBI-7458">
        <id>Q03330</id>
    </interactant>
    <interactant intactId="EBI-2186">
        <id>Q02336</id>
        <label>ADA2</label>
    </interactant>
    <organismsDiffer>false</organismsDiffer>
    <experiments>42</experiments>
</comment>
<comment type="interaction">
    <interactant intactId="EBI-7458">
        <id>Q03330</id>
    </interactant>
    <interactant intactId="EBI-8287">
        <id>Q12060</id>
        <label>HFI1</label>
    </interactant>
    <organismsDiffer>false</organismsDiffer>
    <experiments>22</experiments>
</comment>
<comment type="interaction">
    <interactant intactId="EBI-7458">
        <id>Q03330</id>
    </interactant>
    <interactant intactId="EBI-17372">
        <id>Q00772</id>
        <label>SLT2</label>
    </interactant>
    <organismsDiffer>false</organismsDiffer>
    <experiments>2</experiments>
</comment>
<comment type="subcellular location">
    <subcellularLocation>
        <location evidence="23">Nucleus</location>
    </subcellularLocation>
    <subcellularLocation>
        <location evidence="23">Cytoplasm</location>
    </subcellularLocation>
</comment>
<comment type="domain">
    <text evidence="22">The bromodomain mediates acetyl-lysine binding in histones.</text>
</comment>
<comment type="disruption phenotype">
    <text evidence="7 14">Sensitive to amino acid starvation (PubMed:10549298). Increased sensitivity to genotoxic agent generated DNA damage (PubMed:15340070).</text>
</comment>
<comment type="miscellaneous">
    <text evidence="12">Present with 1180 molecules/cell in log phase SD medium.</text>
</comment>
<comment type="similarity">
    <text evidence="35">Belongs to the acetyltransferase family. GCN5 subfamily.</text>
</comment>